<gene>
    <name evidence="1" type="primary">rplE</name>
    <name type="ordered locus">EcolC_0405</name>
</gene>
<evidence type="ECO:0000255" key="1">
    <source>
        <dbReference type="HAMAP-Rule" id="MF_01333"/>
    </source>
</evidence>
<evidence type="ECO:0000305" key="2"/>
<name>RL5_ECOLC</name>
<comment type="function">
    <text evidence="1">This is one of the proteins that bind and probably mediate the attachment of the 5S RNA into the large ribosomal subunit, where it forms part of the central protuberance. In the 70S ribosome it contacts protein S13 of the 30S subunit (bridge B1b), connecting the 2 subunits; this bridge is implicated in subunit movement. Contacts the P site tRNA; the 5S rRNA and some of its associated proteins might help stabilize positioning of ribosome-bound tRNAs.</text>
</comment>
<comment type="subunit">
    <text evidence="1">Part of the 50S ribosomal subunit; part of the 5S rRNA/L5/L18/L25 subcomplex. Contacts the 5S rRNA and the P site tRNA. Forms a bridge to the 30S subunit in the 70S ribosome.</text>
</comment>
<comment type="similarity">
    <text evidence="1">Belongs to the universal ribosomal protein uL5 family.</text>
</comment>
<proteinExistence type="inferred from homology"/>
<organism>
    <name type="scientific">Escherichia coli (strain ATCC 8739 / DSM 1576 / NBRC 3972 / NCIMB 8545 / WDCM 00012 / Crooks)</name>
    <dbReference type="NCBI Taxonomy" id="481805"/>
    <lineage>
        <taxon>Bacteria</taxon>
        <taxon>Pseudomonadati</taxon>
        <taxon>Pseudomonadota</taxon>
        <taxon>Gammaproteobacteria</taxon>
        <taxon>Enterobacterales</taxon>
        <taxon>Enterobacteriaceae</taxon>
        <taxon>Escherichia</taxon>
    </lineage>
</organism>
<feature type="chain" id="PRO_1000086590" description="Large ribosomal subunit protein uL5">
    <location>
        <begin position="1"/>
        <end position="179"/>
    </location>
</feature>
<feature type="modified residue" description="N6-acetyllysine" evidence="1">
    <location>
        <position position="3"/>
    </location>
</feature>
<protein>
    <recommendedName>
        <fullName evidence="1">Large ribosomal subunit protein uL5</fullName>
    </recommendedName>
    <alternativeName>
        <fullName evidence="2">50S ribosomal protein L5</fullName>
    </alternativeName>
</protein>
<sequence length="179" mass="20302">MAKLHDYYKDEVVKKLMTEFNYNSVMQVPRVEKITLNMGVGEAIADKKLLDNAAADLAAISGQKPLITKARKSVAGFKIRQGYPIGCKVTLRGERMWEFFERLITIAVPRIRDFRGLSAKSFDGRGNYSMGVREQIIFPEIDYDKVDRVRGLDITITTTAKSDEEGRALLAAFDFPFRK</sequence>
<dbReference type="EMBL" id="CP000946">
    <property type="protein sequence ID" value="ACA76083.1"/>
    <property type="molecule type" value="Genomic_DNA"/>
</dbReference>
<dbReference type="RefSeq" id="WP_001096200.1">
    <property type="nucleotide sequence ID" value="NZ_MTFT01000014.1"/>
</dbReference>
<dbReference type="SMR" id="B1IPZ1"/>
<dbReference type="GeneID" id="93778679"/>
<dbReference type="KEGG" id="ecl:EcolC_0405"/>
<dbReference type="HOGENOM" id="CLU_061015_2_1_6"/>
<dbReference type="GO" id="GO:1990904">
    <property type="term" value="C:ribonucleoprotein complex"/>
    <property type="evidence" value="ECO:0007669"/>
    <property type="project" value="UniProtKB-KW"/>
</dbReference>
<dbReference type="GO" id="GO:0005840">
    <property type="term" value="C:ribosome"/>
    <property type="evidence" value="ECO:0007669"/>
    <property type="project" value="UniProtKB-KW"/>
</dbReference>
<dbReference type="GO" id="GO:0019843">
    <property type="term" value="F:rRNA binding"/>
    <property type="evidence" value="ECO:0007669"/>
    <property type="project" value="UniProtKB-UniRule"/>
</dbReference>
<dbReference type="GO" id="GO:0003735">
    <property type="term" value="F:structural constituent of ribosome"/>
    <property type="evidence" value="ECO:0007669"/>
    <property type="project" value="InterPro"/>
</dbReference>
<dbReference type="GO" id="GO:0000049">
    <property type="term" value="F:tRNA binding"/>
    <property type="evidence" value="ECO:0007669"/>
    <property type="project" value="UniProtKB-UniRule"/>
</dbReference>
<dbReference type="GO" id="GO:0006412">
    <property type="term" value="P:translation"/>
    <property type="evidence" value="ECO:0007669"/>
    <property type="project" value="UniProtKB-UniRule"/>
</dbReference>
<dbReference type="FunFam" id="3.30.1440.10:FF:000001">
    <property type="entry name" value="50S ribosomal protein L5"/>
    <property type="match status" value="1"/>
</dbReference>
<dbReference type="Gene3D" id="3.30.1440.10">
    <property type="match status" value="1"/>
</dbReference>
<dbReference type="HAMAP" id="MF_01333_B">
    <property type="entry name" value="Ribosomal_uL5_B"/>
    <property type="match status" value="1"/>
</dbReference>
<dbReference type="InterPro" id="IPR002132">
    <property type="entry name" value="Ribosomal_uL5"/>
</dbReference>
<dbReference type="InterPro" id="IPR020930">
    <property type="entry name" value="Ribosomal_uL5_bac-type"/>
</dbReference>
<dbReference type="InterPro" id="IPR031309">
    <property type="entry name" value="Ribosomal_uL5_C"/>
</dbReference>
<dbReference type="InterPro" id="IPR020929">
    <property type="entry name" value="Ribosomal_uL5_CS"/>
</dbReference>
<dbReference type="InterPro" id="IPR022803">
    <property type="entry name" value="Ribosomal_uL5_dom_sf"/>
</dbReference>
<dbReference type="InterPro" id="IPR031310">
    <property type="entry name" value="Ribosomal_uL5_N"/>
</dbReference>
<dbReference type="NCBIfam" id="NF000585">
    <property type="entry name" value="PRK00010.1"/>
    <property type="match status" value="1"/>
</dbReference>
<dbReference type="PANTHER" id="PTHR11994">
    <property type="entry name" value="60S RIBOSOMAL PROTEIN L11-RELATED"/>
    <property type="match status" value="1"/>
</dbReference>
<dbReference type="Pfam" id="PF00281">
    <property type="entry name" value="Ribosomal_L5"/>
    <property type="match status" value="1"/>
</dbReference>
<dbReference type="Pfam" id="PF00673">
    <property type="entry name" value="Ribosomal_L5_C"/>
    <property type="match status" value="1"/>
</dbReference>
<dbReference type="PIRSF" id="PIRSF002161">
    <property type="entry name" value="Ribosomal_L5"/>
    <property type="match status" value="1"/>
</dbReference>
<dbReference type="SUPFAM" id="SSF55282">
    <property type="entry name" value="RL5-like"/>
    <property type="match status" value="1"/>
</dbReference>
<dbReference type="PROSITE" id="PS00358">
    <property type="entry name" value="RIBOSOMAL_L5"/>
    <property type="match status" value="1"/>
</dbReference>
<reference key="1">
    <citation type="submission" date="2008-02" db="EMBL/GenBank/DDBJ databases">
        <title>Complete sequence of Escherichia coli C str. ATCC 8739.</title>
        <authorList>
            <person name="Copeland A."/>
            <person name="Lucas S."/>
            <person name="Lapidus A."/>
            <person name="Glavina del Rio T."/>
            <person name="Dalin E."/>
            <person name="Tice H."/>
            <person name="Bruce D."/>
            <person name="Goodwin L."/>
            <person name="Pitluck S."/>
            <person name="Kiss H."/>
            <person name="Brettin T."/>
            <person name="Detter J.C."/>
            <person name="Han C."/>
            <person name="Kuske C.R."/>
            <person name="Schmutz J."/>
            <person name="Larimer F."/>
            <person name="Land M."/>
            <person name="Hauser L."/>
            <person name="Kyrpides N."/>
            <person name="Mikhailova N."/>
            <person name="Ingram L."/>
            <person name="Richardson P."/>
        </authorList>
    </citation>
    <scope>NUCLEOTIDE SEQUENCE [LARGE SCALE GENOMIC DNA]</scope>
    <source>
        <strain>ATCC 8739 / DSM 1576 / NBRC 3972 / NCIMB 8545 / WDCM 00012 / Crooks</strain>
    </source>
</reference>
<keyword id="KW-0007">Acetylation</keyword>
<keyword id="KW-0687">Ribonucleoprotein</keyword>
<keyword id="KW-0689">Ribosomal protein</keyword>
<keyword id="KW-0694">RNA-binding</keyword>
<keyword id="KW-0699">rRNA-binding</keyword>
<keyword id="KW-0820">tRNA-binding</keyword>
<accession>B1IPZ1</accession>